<proteinExistence type="inferred from homology"/>
<comment type="function">
    <text evidence="1">Binds directly to 16S ribosomal RNA.</text>
</comment>
<comment type="similarity">
    <text evidence="1">Belongs to the bacterial ribosomal protein bS20 family.</text>
</comment>
<evidence type="ECO:0000255" key="1">
    <source>
        <dbReference type="HAMAP-Rule" id="MF_00500"/>
    </source>
</evidence>
<evidence type="ECO:0000305" key="2"/>
<reference key="1">
    <citation type="journal article" date="2008" name="Appl. Environ. Microbiol.">
        <title>Genome of the epsilonproteobacterial chemolithoautotroph Sulfurimonas denitrificans.</title>
        <authorList>
            <person name="Sievert S.M."/>
            <person name="Scott K.M."/>
            <person name="Klotz M.G."/>
            <person name="Chain P.S.G."/>
            <person name="Hauser L.J."/>
            <person name="Hemp J."/>
            <person name="Huegler M."/>
            <person name="Land M."/>
            <person name="Lapidus A."/>
            <person name="Larimer F.W."/>
            <person name="Lucas S."/>
            <person name="Malfatti S.A."/>
            <person name="Meyer F."/>
            <person name="Paulsen I.T."/>
            <person name="Ren Q."/>
            <person name="Simon J."/>
            <person name="Bailey K."/>
            <person name="Diaz E."/>
            <person name="Fitzpatrick K.A."/>
            <person name="Glover B."/>
            <person name="Gwatney N."/>
            <person name="Korajkic A."/>
            <person name="Long A."/>
            <person name="Mobberley J.M."/>
            <person name="Pantry S.N."/>
            <person name="Pazder G."/>
            <person name="Peterson S."/>
            <person name="Quintanilla J.D."/>
            <person name="Sprinkle R."/>
            <person name="Stephens J."/>
            <person name="Thomas P."/>
            <person name="Vaughn R."/>
            <person name="Weber M.J."/>
            <person name="Wooten L.L."/>
        </authorList>
    </citation>
    <scope>NUCLEOTIDE SEQUENCE [LARGE SCALE GENOMIC DNA]</scope>
    <source>
        <strain>ATCC 33889 / DSM 1251</strain>
    </source>
</reference>
<gene>
    <name evidence="1" type="primary">rpsT</name>
    <name type="ordered locus">Suden_2044</name>
</gene>
<accession>Q30NW3</accession>
<name>RS20_SULDN</name>
<sequence>MANHKSSIKRIRQTIVRSERNRFYRTRLKNIVKDVRSAITAGNKEEAASAMGVANKQIQKFVSKGVLKKETAARKISRLHRAVNAI</sequence>
<dbReference type="EMBL" id="CP000153">
    <property type="protein sequence ID" value="ABB45318.1"/>
    <property type="molecule type" value="Genomic_DNA"/>
</dbReference>
<dbReference type="RefSeq" id="WP_011373658.1">
    <property type="nucleotide sequence ID" value="NC_007575.1"/>
</dbReference>
<dbReference type="SMR" id="Q30NW3"/>
<dbReference type="STRING" id="326298.Suden_2044"/>
<dbReference type="KEGG" id="tdn:Suden_2044"/>
<dbReference type="eggNOG" id="COG0268">
    <property type="taxonomic scope" value="Bacteria"/>
</dbReference>
<dbReference type="HOGENOM" id="CLU_160655_3_0_7"/>
<dbReference type="OrthoDB" id="9807974at2"/>
<dbReference type="Proteomes" id="UP000002714">
    <property type="component" value="Chromosome"/>
</dbReference>
<dbReference type="GO" id="GO:0005829">
    <property type="term" value="C:cytosol"/>
    <property type="evidence" value="ECO:0007669"/>
    <property type="project" value="TreeGrafter"/>
</dbReference>
<dbReference type="GO" id="GO:0015935">
    <property type="term" value="C:small ribosomal subunit"/>
    <property type="evidence" value="ECO:0007669"/>
    <property type="project" value="TreeGrafter"/>
</dbReference>
<dbReference type="GO" id="GO:0070181">
    <property type="term" value="F:small ribosomal subunit rRNA binding"/>
    <property type="evidence" value="ECO:0007669"/>
    <property type="project" value="TreeGrafter"/>
</dbReference>
<dbReference type="GO" id="GO:0003735">
    <property type="term" value="F:structural constituent of ribosome"/>
    <property type="evidence" value="ECO:0007669"/>
    <property type="project" value="InterPro"/>
</dbReference>
<dbReference type="GO" id="GO:0006412">
    <property type="term" value="P:translation"/>
    <property type="evidence" value="ECO:0007669"/>
    <property type="project" value="UniProtKB-UniRule"/>
</dbReference>
<dbReference type="FunFam" id="1.20.58.110:FF:000001">
    <property type="entry name" value="30S ribosomal protein S20"/>
    <property type="match status" value="1"/>
</dbReference>
<dbReference type="Gene3D" id="1.20.58.110">
    <property type="entry name" value="Ribosomal protein S20"/>
    <property type="match status" value="1"/>
</dbReference>
<dbReference type="HAMAP" id="MF_00500">
    <property type="entry name" value="Ribosomal_bS20"/>
    <property type="match status" value="1"/>
</dbReference>
<dbReference type="InterPro" id="IPR002583">
    <property type="entry name" value="Ribosomal_bS20"/>
</dbReference>
<dbReference type="InterPro" id="IPR036510">
    <property type="entry name" value="Ribosomal_bS20_sf"/>
</dbReference>
<dbReference type="NCBIfam" id="TIGR00029">
    <property type="entry name" value="S20"/>
    <property type="match status" value="1"/>
</dbReference>
<dbReference type="PANTHER" id="PTHR33398">
    <property type="entry name" value="30S RIBOSOMAL PROTEIN S20"/>
    <property type="match status" value="1"/>
</dbReference>
<dbReference type="PANTHER" id="PTHR33398:SF1">
    <property type="entry name" value="SMALL RIBOSOMAL SUBUNIT PROTEIN BS20C"/>
    <property type="match status" value="1"/>
</dbReference>
<dbReference type="Pfam" id="PF01649">
    <property type="entry name" value="Ribosomal_S20p"/>
    <property type="match status" value="1"/>
</dbReference>
<dbReference type="SUPFAM" id="SSF46992">
    <property type="entry name" value="Ribosomal protein S20"/>
    <property type="match status" value="1"/>
</dbReference>
<feature type="chain" id="PRO_0000236464" description="Small ribosomal subunit protein bS20">
    <location>
        <begin position="1"/>
        <end position="86"/>
    </location>
</feature>
<protein>
    <recommendedName>
        <fullName evidence="1">Small ribosomal subunit protein bS20</fullName>
    </recommendedName>
    <alternativeName>
        <fullName evidence="2">30S ribosomal protein S20</fullName>
    </alternativeName>
</protein>
<keyword id="KW-1185">Reference proteome</keyword>
<keyword id="KW-0687">Ribonucleoprotein</keyword>
<keyword id="KW-0689">Ribosomal protein</keyword>
<keyword id="KW-0694">RNA-binding</keyword>
<keyword id="KW-0699">rRNA-binding</keyword>
<organism>
    <name type="scientific">Sulfurimonas denitrificans (strain ATCC 33889 / DSM 1251)</name>
    <name type="common">Thiomicrospira denitrificans (strain ATCC 33889 / DSM 1251)</name>
    <dbReference type="NCBI Taxonomy" id="326298"/>
    <lineage>
        <taxon>Bacteria</taxon>
        <taxon>Pseudomonadati</taxon>
        <taxon>Campylobacterota</taxon>
        <taxon>Epsilonproteobacteria</taxon>
        <taxon>Campylobacterales</taxon>
        <taxon>Sulfurimonadaceae</taxon>
        <taxon>Sulfurimonas</taxon>
    </lineage>
</organism>